<feature type="chain" id="PRO_1000025620" description="GMP reductase">
    <location>
        <begin position="1"/>
        <end position="347"/>
    </location>
</feature>
<feature type="active site" description="Thioimidate intermediate" evidence="1">
    <location>
        <position position="186"/>
    </location>
</feature>
<feature type="binding site" evidence="1">
    <location>
        <begin position="108"/>
        <end position="131"/>
    </location>
    <ligand>
        <name>NADP(+)</name>
        <dbReference type="ChEBI" id="CHEBI:58349"/>
    </ligand>
</feature>
<feature type="binding site" evidence="1">
    <location>
        <position position="181"/>
    </location>
    <ligand>
        <name>K(+)</name>
        <dbReference type="ChEBI" id="CHEBI:29103"/>
    </ligand>
</feature>
<feature type="binding site" evidence="1">
    <location>
        <position position="183"/>
    </location>
    <ligand>
        <name>K(+)</name>
        <dbReference type="ChEBI" id="CHEBI:29103"/>
    </ligand>
</feature>
<feature type="binding site" evidence="1">
    <location>
        <begin position="216"/>
        <end position="239"/>
    </location>
    <ligand>
        <name>NADP(+)</name>
        <dbReference type="ChEBI" id="CHEBI:58349"/>
    </ligand>
</feature>
<name>GUAC_SHIF8</name>
<proteinExistence type="inferred from homology"/>
<keyword id="KW-0479">Metal-binding</keyword>
<keyword id="KW-0521">NADP</keyword>
<keyword id="KW-0560">Oxidoreductase</keyword>
<keyword id="KW-0630">Potassium</keyword>
<reference key="1">
    <citation type="journal article" date="2006" name="BMC Genomics">
        <title>Complete genome sequence of Shigella flexneri 5b and comparison with Shigella flexneri 2a.</title>
        <authorList>
            <person name="Nie H."/>
            <person name="Yang F."/>
            <person name="Zhang X."/>
            <person name="Yang J."/>
            <person name="Chen L."/>
            <person name="Wang J."/>
            <person name="Xiong Z."/>
            <person name="Peng J."/>
            <person name="Sun L."/>
            <person name="Dong J."/>
            <person name="Xue Y."/>
            <person name="Xu X."/>
            <person name="Chen S."/>
            <person name="Yao Z."/>
            <person name="Shen Y."/>
            <person name="Jin Q."/>
        </authorList>
    </citation>
    <scope>NUCLEOTIDE SEQUENCE [LARGE SCALE GENOMIC DNA]</scope>
    <source>
        <strain>8401</strain>
    </source>
</reference>
<protein>
    <recommendedName>
        <fullName evidence="1">GMP reductase</fullName>
        <ecNumber evidence="1">1.7.1.7</ecNumber>
    </recommendedName>
    <alternativeName>
        <fullName evidence="1">Guanosine 5'-monophosphate oxidoreductase</fullName>
        <shortName evidence="1">Guanosine monophosphate reductase</shortName>
    </alternativeName>
</protein>
<organism>
    <name type="scientific">Shigella flexneri serotype 5b (strain 8401)</name>
    <dbReference type="NCBI Taxonomy" id="373384"/>
    <lineage>
        <taxon>Bacteria</taxon>
        <taxon>Pseudomonadati</taxon>
        <taxon>Pseudomonadota</taxon>
        <taxon>Gammaproteobacteria</taxon>
        <taxon>Enterobacterales</taxon>
        <taxon>Enterobacteriaceae</taxon>
        <taxon>Shigella</taxon>
    </lineage>
</organism>
<sequence length="347" mass="37353">MRIEEDLKLGFKDVLIRPKRSTLKSRSDVELERQFTFKHSGQSWSGVPIIAANMDTVGTFSMASALASFDILTAVHKHFSVEEWQAFINNSSADVLKHVMVSTGTSDADFEKTKQILDLNPALNFVCIDVANGYSEHFVQFVAKAREAWPTKTICAGNVVTGEMCEELILSGADIVKVGIGPGSVCTTRVKTGVGYPQLSAVIECADAAHGLGGMIVSDGGCTTPGDVAKAFGGGADFVMLGGMLAGHEESGGRIVEENGEKFMLFYGMSSESAMKRHVGGVAEYRAAEGKTVKLPLRGPVENTARDILGGLRSACTYVGASRLKELTKRTTFIRVLEQENRIFNNL</sequence>
<comment type="function">
    <text evidence="1">Catalyzes the irreversible NADPH-dependent deamination of GMP to IMP. It functions in the conversion of nucleobase, nucleoside and nucleotide derivatives of G to A nucleotides, and in maintaining the intracellular balance of A and G nucleotides.</text>
</comment>
<comment type="catalytic activity">
    <reaction evidence="1">
        <text>IMP + NH4(+) + NADP(+) = GMP + NADPH + 2 H(+)</text>
        <dbReference type="Rhea" id="RHEA:17185"/>
        <dbReference type="ChEBI" id="CHEBI:15378"/>
        <dbReference type="ChEBI" id="CHEBI:28938"/>
        <dbReference type="ChEBI" id="CHEBI:57783"/>
        <dbReference type="ChEBI" id="CHEBI:58053"/>
        <dbReference type="ChEBI" id="CHEBI:58115"/>
        <dbReference type="ChEBI" id="CHEBI:58349"/>
        <dbReference type="EC" id="1.7.1.7"/>
    </reaction>
</comment>
<comment type="subunit">
    <text evidence="1">Homotetramer.</text>
</comment>
<comment type="similarity">
    <text evidence="1">Belongs to the IMPDH/GMPR family. GuaC type 1 subfamily.</text>
</comment>
<gene>
    <name evidence="1" type="primary">guaC</name>
    <name type="ordered locus">SFV_0096</name>
</gene>
<accession>Q0T894</accession>
<evidence type="ECO:0000255" key="1">
    <source>
        <dbReference type="HAMAP-Rule" id="MF_00596"/>
    </source>
</evidence>
<dbReference type="EC" id="1.7.1.7" evidence="1"/>
<dbReference type="EMBL" id="CP000266">
    <property type="protein sequence ID" value="ABF02382.1"/>
    <property type="molecule type" value="Genomic_DNA"/>
</dbReference>
<dbReference type="RefSeq" id="WP_001217322.1">
    <property type="nucleotide sequence ID" value="NC_008258.1"/>
</dbReference>
<dbReference type="SMR" id="Q0T894"/>
<dbReference type="KEGG" id="sfv:SFV_0096"/>
<dbReference type="HOGENOM" id="CLU_022552_5_3_6"/>
<dbReference type="Proteomes" id="UP000000659">
    <property type="component" value="Chromosome"/>
</dbReference>
<dbReference type="GO" id="GO:0005829">
    <property type="term" value="C:cytosol"/>
    <property type="evidence" value="ECO:0007669"/>
    <property type="project" value="TreeGrafter"/>
</dbReference>
<dbReference type="GO" id="GO:1902560">
    <property type="term" value="C:GMP reductase complex"/>
    <property type="evidence" value="ECO:0007669"/>
    <property type="project" value="InterPro"/>
</dbReference>
<dbReference type="GO" id="GO:0003920">
    <property type="term" value="F:GMP reductase activity"/>
    <property type="evidence" value="ECO:0007669"/>
    <property type="project" value="UniProtKB-UniRule"/>
</dbReference>
<dbReference type="GO" id="GO:0046872">
    <property type="term" value="F:metal ion binding"/>
    <property type="evidence" value="ECO:0007669"/>
    <property type="project" value="UniProtKB-KW"/>
</dbReference>
<dbReference type="GO" id="GO:0006163">
    <property type="term" value="P:purine nucleotide metabolic process"/>
    <property type="evidence" value="ECO:0007669"/>
    <property type="project" value="UniProtKB-UniRule"/>
</dbReference>
<dbReference type="CDD" id="cd00381">
    <property type="entry name" value="IMPDH"/>
    <property type="match status" value="1"/>
</dbReference>
<dbReference type="FunFam" id="3.20.20.70:FF:000012">
    <property type="entry name" value="GMP reductase"/>
    <property type="match status" value="1"/>
</dbReference>
<dbReference type="Gene3D" id="3.20.20.70">
    <property type="entry name" value="Aldolase class I"/>
    <property type="match status" value="1"/>
</dbReference>
<dbReference type="HAMAP" id="MF_00596">
    <property type="entry name" value="GMP_reduct_type1"/>
    <property type="match status" value="1"/>
</dbReference>
<dbReference type="InterPro" id="IPR013785">
    <property type="entry name" value="Aldolase_TIM"/>
</dbReference>
<dbReference type="InterPro" id="IPR050139">
    <property type="entry name" value="GMP_reductase"/>
</dbReference>
<dbReference type="InterPro" id="IPR005993">
    <property type="entry name" value="GMPR"/>
</dbReference>
<dbReference type="InterPro" id="IPR015875">
    <property type="entry name" value="IMP_DH/GMP_Rdtase_CS"/>
</dbReference>
<dbReference type="InterPro" id="IPR001093">
    <property type="entry name" value="IMP_DH_GMPRt"/>
</dbReference>
<dbReference type="NCBIfam" id="TIGR01305">
    <property type="entry name" value="GMP_reduct_1"/>
    <property type="match status" value="1"/>
</dbReference>
<dbReference type="NCBIfam" id="NF003470">
    <property type="entry name" value="PRK05096.1"/>
    <property type="match status" value="1"/>
</dbReference>
<dbReference type="PANTHER" id="PTHR43170">
    <property type="entry name" value="GMP REDUCTASE"/>
    <property type="match status" value="1"/>
</dbReference>
<dbReference type="PANTHER" id="PTHR43170:SF5">
    <property type="entry name" value="GMP REDUCTASE"/>
    <property type="match status" value="1"/>
</dbReference>
<dbReference type="Pfam" id="PF00478">
    <property type="entry name" value="IMPDH"/>
    <property type="match status" value="1"/>
</dbReference>
<dbReference type="PIRSF" id="PIRSF000235">
    <property type="entry name" value="GMP_reductase"/>
    <property type="match status" value="1"/>
</dbReference>
<dbReference type="SMART" id="SM01240">
    <property type="entry name" value="IMPDH"/>
    <property type="match status" value="1"/>
</dbReference>
<dbReference type="SUPFAM" id="SSF51412">
    <property type="entry name" value="Inosine monophosphate dehydrogenase (IMPDH)"/>
    <property type="match status" value="1"/>
</dbReference>
<dbReference type="PROSITE" id="PS00487">
    <property type="entry name" value="IMP_DH_GMP_RED"/>
    <property type="match status" value="1"/>
</dbReference>